<gene>
    <name evidence="1" type="primary">uppP</name>
    <name type="ordered locus">CYA_0087</name>
</gene>
<protein>
    <recommendedName>
        <fullName evidence="1">Undecaprenyl-diphosphatase</fullName>
        <ecNumber evidence="1">3.6.1.27</ecNumber>
    </recommendedName>
    <alternativeName>
        <fullName evidence="1">Bacitracin resistance protein</fullName>
    </alternativeName>
    <alternativeName>
        <fullName evidence="1">Undecaprenyl pyrophosphate phosphatase</fullName>
    </alternativeName>
</protein>
<keyword id="KW-0046">Antibiotic resistance</keyword>
<keyword id="KW-0997">Cell inner membrane</keyword>
<keyword id="KW-1003">Cell membrane</keyword>
<keyword id="KW-0133">Cell shape</keyword>
<keyword id="KW-0961">Cell wall biogenesis/degradation</keyword>
<keyword id="KW-0378">Hydrolase</keyword>
<keyword id="KW-0472">Membrane</keyword>
<keyword id="KW-0573">Peptidoglycan synthesis</keyword>
<keyword id="KW-0812">Transmembrane</keyword>
<keyword id="KW-1133">Transmembrane helix</keyword>
<organism>
    <name type="scientific">Synechococcus sp. (strain JA-3-3Ab)</name>
    <name type="common">Cyanobacteria bacterium Yellowstone A-Prime</name>
    <dbReference type="NCBI Taxonomy" id="321327"/>
    <lineage>
        <taxon>Bacteria</taxon>
        <taxon>Bacillati</taxon>
        <taxon>Cyanobacteriota</taxon>
        <taxon>Cyanophyceae</taxon>
        <taxon>Synechococcales</taxon>
        <taxon>Synechococcaceae</taxon>
        <taxon>Synechococcus</taxon>
    </lineage>
</organism>
<evidence type="ECO:0000255" key="1">
    <source>
        <dbReference type="HAMAP-Rule" id="MF_01006"/>
    </source>
</evidence>
<proteinExistence type="inferred from homology"/>
<feature type="chain" id="PRO_0000250275" description="Undecaprenyl-diphosphatase">
    <location>
        <begin position="1"/>
        <end position="276"/>
    </location>
</feature>
<feature type="transmembrane region" description="Helical" evidence="1">
    <location>
        <begin position="46"/>
        <end position="66"/>
    </location>
</feature>
<feature type="transmembrane region" description="Helical" evidence="1">
    <location>
        <begin position="94"/>
        <end position="114"/>
    </location>
</feature>
<feature type="transmembrane region" description="Helical" evidence="1">
    <location>
        <begin position="122"/>
        <end position="142"/>
    </location>
</feature>
<feature type="transmembrane region" description="Helical" evidence="1">
    <location>
        <begin position="152"/>
        <end position="172"/>
    </location>
</feature>
<feature type="transmembrane region" description="Helical" evidence="1">
    <location>
        <begin position="196"/>
        <end position="216"/>
    </location>
</feature>
<feature type="transmembrane region" description="Helical" evidence="1">
    <location>
        <begin position="226"/>
        <end position="246"/>
    </location>
</feature>
<feature type="transmembrane region" description="Helical" evidence="1">
    <location>
        <begin position="253"/>
        <end position="273"/>
    </location>
</feature>
<comment type="function">
    <text evidence="1">Catalyzes the dephosphorylation of undecaprenyl diphosphate (UPP). Confers resistance to bacitracin.</text>
</comment>
<comment type="catalytic activity">
    <reaction evidence="1">
        <text>di-trans,octa-cis-undecaprenyl diphosphate + H2O = di-trans,octa-cis-undecaprenyl phosphate + phosphate + H(+)</text>
        <dbReference type="Rhea" id="RHEA:28094"/>
        <dbReference type="ChEBI" id="CHEBI:15377"/>
        <dbReference type="ChEBI" id="CHEBI:15378"/>
        <dbReference type="ChEBI" id="CHEBI:43474"/>
        <dbReference type="ChEBI" id="CHEBI:58405"/>
        <dbReference type="ChEBI" id="CHEBI:60392"/>
        <dbReference type="EC" id="3.6.1.27"/>
    </reaction>
</comment>
<comment type="subcellular location">
    <subcellularLocation>
        <location evidence="1">Cell inner membrane</location>
        <topology evidence="1">Multi-pass membrane protein</topology>
    </subcellularLocation>
</comment>
<comment type="miscellaneous">
    <text>Bacitracin is thought to be involved in the inhibition of peptidoglycan synthesis by sequestering undecaprenyl diphosphate, thereby reducing the pool of lipid carrier available.</text>
</comment>
<comment type="similarity">
    <text evidence="1">Belongs to the UppP family.</text>
</comment>
<sequence length="276" mass="30083">MLADIWYPNWWQALVLGMVQGITEFLPISSTAHLRVFPALLGWPDAGASFAAVIQLGSLGAVLIYFASDLRQLLLGSWKAWQKRDFQEESWRLLMGILVGTLPIVIAGWAVKAIWGSPPRQLWVVAAAAIGLALALGWAERVGKRRRDLHSLGIGDGLWVGLAQALALIPGVSRSGVTLTAALLLDLQRSAAARYSFLLGIPALFLAGVAEFIAEFRAEALLSQGLGTLSAFVFSYGSIDWLIRFLQRSSTWVFIVYRIGFGLFIFLGLALGFLQP</sequence>
<accession>Q2JXZ9</accession>
<dbReference type="EC" id="3.6.1.27" evidence="1"/>
<dbReference type="EMBL" id="CP000239">
    <property type="protein sequence ID" value="ABC98318.1"/>
    <property type="molecule type" value="Genomic_DNA"/>
</dbReference>
<dbReference type="RefSeq" id="WP_011429010.1">
    <property type="nucleotide sequence ID" value="NC_007775.1"/>
</dbReference>
<dbReference type="SMR" id="Q2JXZ9"/>
<dbReference type="STRING" id="321327.CYA_0087"/>
<dbReference type="KEGG" id="cya:CYA_0087"/>
<dbReference type="eggNOG" id="COG1968">
    <property type="taxonomic scope" value="Bacteria"/>
</dbReference>
<dbReference type="HOGENOM" id="CLU_060296_1_0_3"/>
<dbReference type="OrthoDB" id="9808289at2"/>
<dbReference type="Proteomes" id="UP000008818">
    <property type="component" value="Chromosome"/>
</dbReference>
<dbReference type="GO" id="GO:0005886">
    <property type="term" value="C:plasma membrane"/>
    <property type="evidence" value="ECO:0007669"/>
    <property type="project" value="UniProtKB-SubCell"/>
</dbReference>
<dbReference type="GO" id="GO:0050380">
    <property type="term" value="F:undecaprenyl-diphosphatase activity"/>
    <property type="evidence" value="ECO:0007669"/>
    <property type="project" value="UniProtKB-UniRule"/>
</dbReference>
<dbReference type="GO" id="GO:0071555">
    <property type="term" value="P:cell wall organization"/>
    <property type="evidence" value="ECO:0007669"/>
    <property type="project" value="UniProtKB-KW"/>
</dbReference>
<dbReference type="GO" id="GO:0009252">
    <property type="term" value="P:peptidoglycan biosynthetic process"/>
    <property type="evidence" value="ECO:0007669"/>
    <property type="project" value="UniProtKB-KW"/>
</dbReference>
<dbReference type="GO" id="GO:0008360">
    <property type="term" value="P:regulation of cell shape"/>
    <property type="evidence" value="ECO:0007669"/>
    <property type="project" value="UniProtKB-KW"/>
</dbReference>
<dbReference type="GO" id="GO:0046677">
    <property type="term" value="P:response to antibiotic"/>
    <property type="evidence" value="ECO:0007669"/>
    <property type="project" value="UniProtKB-UniRule"/>
</dbReference>
<dbReference type="HAMAP" id="MF_01006">
    <property type="entry name" value="Undec_diphosphatase"/>
    <property type="match status" value="1"/>
</dbReference>
<dbReference type="InterPro" id="IPR003824">
    <property type="entry name" value="UppP"/>
</dbReference>
<dbReference type="NCBIfam" id="NF001394">
    <property type="entry name" value="PRK00281.2-5"/>
    <property type="match status" value="1"/>
</dbReference>
<dbReference type="NCBIfam" id="TIGR00753">
    <property type="entry name" value="undec_PP_bacA"/>
    <property type="match status" value="1"/>
</dbReference>
<dbReference type="PANTHER" id="PTHR30622">
    <property type="entry name" value="UNDECAPRENYL-DIPHOSPHATASE"/>
    <property type="match status" value="1"/>
</dbReference>
<dbReference type="PANTHER" id="PTHR30622:SF4">
    <property type="entry name" value="UNDECAPRENYL-DIPHOSPHATASE"/>
    <property type="match status" value="1"/>
</dbReference>
<dbReference type="Pfam" id="PF02673">
    <property type="entry name" value="BacA"/>
    <property type="match status" value="1"/>
</dbReference>
<name>UPPP_SYNJA</name>
<reference key="1">
    <citation type="journal article" date="2007" name="ISME J.">
        <title>Population level functional diversity in a microbial community revealed by comparative genomic and metagenomic analyses.</title>
        <authorList>
            <person name="Bhaya D."/>
            <person name="Grossman A.R."/>
            <person name="Steunou A.-S."/>
            <person name="Khuri N."/>
            <person name="Cohan F.M."/>
            <person name="Hamamura N."/>
            <person name="Melendrez M.C."/>
            <person name="Bateson M.M."/>
            <person name="Ward D.M."/>
            <person name="Heidelberg J.F."/>
        </authorList>
    </citation>
    <scope>NUCLEOTIDE SEQUENCE [LARGE SCALE GENOMIC DNA]</scope>
    <source>
        <strain>JA-3-3Ab</strain>
    </source>
</reference>